<proteinExistence type="inferred from homology"/>
<dbReference type="EMBL" id="HACE01000099">
    <property type="protein sequence ID" value="CDZ18883.1"/>
    <property type="molecule type" value="mRNA"/>
</dbReference>
<dbReference type="GO" id="GO:0005576">
    <property type="term" value="C:extracellular region"/>
    <property type="evidence" value="ECO:0007669"/>
    <property type="project" value="UniProtKB-SubCell"/>
</dbReference>
<dbReference type="GO" id="GO:0042742">
    <property type="term" value="P:defense response to bacterium"/>
    <property type="evidence" value="ECO:0007669"/>
    <property type="project" value="UniProtKB-KW"/>
</dbReference>
<comment type="function">
    <text evidence="1">Antibacterial peptide.</text>
</comment>
<comment type="subcellular location">
    <subcellularLocation>
        <location evidence="4">Secreted</location>
    </subcellularLocation>
</comment>
<comment type="tissue specificity">
    <text evidence="4">Expressed by the venom gland.</text>
</comment>
<reference key="1">
    <citation type="journal article" date="2020" name="Proc. Natl. Acad. Sci. U.S.A.">
        <title>Structural venomics reveals evolution of a complex venom by duplication and diversification of an ancient peptide-encoding gene.</title>
        <authorList>
            <person name="Pineda S.S."/>
            <person name="Chin Y.K."/>
            <person name="Undheim E.A.B."/>
            <person name="Senff S."/>
            <person name="Mobli M."/>
            <person name="Dauly C."/>
            <person name="Escoubas P."/>
            <person name="Nicholson G.M."/>
            <person name="Kaas Q."/>
            <person name="Guo S."/>
            <person name="Herzig V."/>
            <person name="Mattick J.S."/>
            <person name="King G.F."/>
        </authorList>
    </citation>
    <scope>NUCLEOTIDE SEQUENCE [MRNA]</scope>
    <source>
        <tissue>Venom gland</tissue>
    </source>
</reference>
<reference evidence="5" key="2">
    <citation type="thesis" date="2012" institute="The University of Queensland" country="Australia">
        <title>Probing the chemical diversity of venom from the Australian Funnel-web spider Hadronyche infensa.</title>
        <authorList>
            <person name="Pineda S.S."/>
        </authorList>
    </citation>
    <scope>NUCLEOTIDE SEQUENCE [MRNA]</scope>
    <source>
        <tissue>Venom gland</tissue>
    </source>
</reference>
<reference evidence="5" key="3">
    <citation type="submission" date="2014-07" db="EMBL/GenBank/DDBJ databases">
        <authorList>
            <person name="Zhang J.E."/>
            <person name="Yang H."/>
            <person name="Guo J."/>
            <person name="Deng Z."/>
            <person name="Luo H."/>
            <person name="Luo M."/>
            <person name="Zhao B."/>
        </authorList>
    </citation>
    <scope>NUCLEOTIDE SEQUENCE [MRNA]</scope>
    <source>
        <tissue>Venom gland</tissue>
    </source>
</reference>
<protein>
    <recommendedName>
        <fullName evidence="3">Gomesin-like peptide</fullName>
    </recommendedName>
    <alternativeName>
        <fullName evidence="3">SF5 peptide</fullName>
    </alternativeName>
    <alternativeName>
        <fullName evidence="5">X-hexatoxin-Hi1a</fullName>
    </alternativeName>
</protein>
<sequence length="84" mass="9601">MNRTRALVCLFLAVLILAHESEAQCRRLCYRNRCVTYCRGRGKRSVEEPSGGAQVVEKRAVDDADIPSAVEERELDEEESIEFR</sequence>
<evidence type="ECO:0000250" key="1">
    <source>
        <dbReference type="UniProtKB" id="P82358"/>
    </source>
</evidence>
<evidence type="ECO:0000255" key="2"/>
<evidence type="ECO:0000303" key="3">
    <source>
    </source>
</evidence>
<evidence type="ECO:0000305" key="4">
    <source>
    </source>
</evidence>
<evidence type="ECO:0000312" key="5">
    <source>
        <dbReference type="EMBL" id="CDZ18883.1"/>
    </source>
</evidence>
<accession>A0A1D0BZI2</accession>
<keyword id="KW-0027">Amidation</keyword>
<keyword id="KW-0044">Antibiotic</keyword>
<keyword id="KW-0929">Antimicrobial</keyword>
<keyword id="KW-1015">Disulfide bond</keyword>
<keyword id="KW-0873">Pyrrolidone carboxylic acid</keyword>
<keyword id="KW-0964">Secreted</keyword>
<keyword id="KW-0732">Signal</keyword>
<name>GOML_HADIN</name>
<organism evidence="5">
    <name type="scientific">Hadronyche infensa</name>
    <name type="common">Fraser island funnel-web spider</name>
    <name type="synonym">Atrax infensus</name>
    <dbReference type="NCBI Taxonomy" id="153481"/>
    <lineage>
        <taxon>Eukaryota</taxon>
        <taxon>Metazoa</taxon>
        <taxon>Ecdysozoa</taxon>
        <taxon>Arthropoda</taxon>
        <taxon>Chelicerata</taxon>
        <taxon>Arachnida</taxon>
        <taxon>Araneae</taxon>
        <taxon>Mygalomorphae</taxon>
        <taxon>Hexathelidae</taxon>
        <taxon>Hadronyche</taxon>
    </lineage>
</organism>
<feature type="signal peptide" evidence="2">
    <location>
        <begin position="1"/>
        <end position="23"/>
    </location>
</feature>
<feature type="peptide" id="PRO_5008897038" description="Gomesin-like peptide" evidence="1">
    <location>
        <begin position="24"/>
        <end position="41"/>
    </location>
</feature>
<feature type="propeptide" id="PRO_0000459666" evidence="1">
    <location>
        <begin position="42"/>
        <end position="84"/>
    </location>
</feature>
<feature type="modified residue" description="Pyrrolidone carboxylic acid" evidence="1">
    <location>
        <position position="24"/>
    </location>
</feature>
<feature type="modified residue" description="Arginine amide" evidence="1">
    <location>
        <position position="41"/>
    </location>
</feature>
<feature type="disulfide bond" evidence="1">
    <location>
        <begin position="25"/>
        <end position="38"/>
    </location>
</feature>
<feature type="disulfide bond" evidence="1">
    <location>
        <begin position="29"/>
        <end position="34"/>
    </location>
</feature>